<proteinExistence type="inferred from homology"/>
<name>RLMF_FLAJ1</name>
<reference key="1">
    <citation type="journal article" date="2009" name="Appl. Environ. Microbiol.">
        <title>Novel features of the polysaccharide-digesting gliding bacterium Flavobacterium johnsoniae as revealed by genome sequence analysis.</title>
        <authorList>
            <person name="McBride M.J."/>
            <person name="Xie G."/>
            <person name="Martens E.C."/>
            <person name="Lapidus A."/>
            <person name="Henrissat B."/>
            <person name="Rhodes R.G."/>
            <person name="Goltsman E."/>
            <person name="Wang W."/>
            <person name="Xu J."/>
            <person name="Hunnicutt D.W."/>
            <person name="Staroscik A.M."/>
            <person name="Hoover T.R."/>
            <person name="Cheng Y.Q."/>
            <person name="Stein J.L."/>
        </authorList>
    </citation>
    <scope>NUCLEOTIDE SEQUENCE [LARGE SCALE GENOMIC DNA]</scope>
    <source>
        <strain>ATCC 17061 / DSM 2064 / JCM 8514 / BCRC 14874 / CCUG 350202 / NBRC 14942 / NCIMB 11054 / UW101</strain>
    </source>
</reference>
<organism>
    <name type="scientific">Flavobacterium johnsoniae (strain ATCC 17061 / DSM 2064 / JCM 8514 / BCRC 14874 / CCUG 350202 / NBRC 14942 / NCIMB 11054 / UW101)</name>
    <name type="common">Cytophaga johnsonae</name>
    <dbReference type="NCBI Taxonomy" id="376686"/>
    <lineage>
        <taxon>Bacteria</taxon>
        <taxon>Pseudomonadati</taxon>
        <taxon>Bacteroidota</taxon>
        <taxon>Flavobacteriia</taxon>
        <taxon>Flavobacteriales</taxon>
        <taxon>Flavobacteriaceae</taxon>
        <taxon>Flavobacterium</taxon>
    </lineage>
</organism>
<sequence>MKAENNSQKDNLHPRNLHRSRYDFELLISNCPELKAFISINKHGIETVDFSNPLAVKTLNKALLQTYYDIQNWDIPKNYLCPPIPGRADYIHYLADLLAETNNGKIPEGNSVMGLDIGTGANLIYPILGNSIYNWSFVATDIYKTSIENASKIIEANPRLIDAVSLQQQTEPRFIFKNIIIPEDRFTFTMCNPPFHASAEEANKSTSRKVSNLNPKEKKNTNPVLNFGGQNAELWCNGGEIGFITQMIYESVKYASQVLWFTTLVSKKENLSSIYKTLKKVNAVSVKTIEMSQGQKNSRIVAWSFLNNTEQKSWKF</sequence>
<keyword id="KW-0963">Cytoplasm</keyword>
<keyword id="KW-0489">Methyltransferase</keyword>
<keyword id="KW-0698">rRNA processing</keyword>
<keyword id="KW-0949">S-adenosyl-L-methionine</keyword>
<keyword id="KW-0808">Transferase</keyword>
<protein>
    <recommendedName>
        <fullName evidence="1">Ribosomal RNA large subunit methyltransferase F</fullName>
        <ecNumber evidence="1">2.1.1.181</ecNumber>
    </recommendedName>
    <alternativeName>
        <fullName evidence="1">23S rRNA mA1618 methyltransferase</fullName>
    </alternativeName>
    <alternativeName>
        <fullName evidence="1">rRNA adenine N-6-methyltransferase</fullName>
    </alternativeName>
</protein>
<feature type="chain" id="PRO_0000349916" description="Ribosomal RNA large subunit methyltransferase F">
    <location>
        <begin position="1"/>
        <end position="316"/>
    </location>
</feature>
<feature type="region of interest" description="Disordered" evidence="2">
    <location>
        <begin position="200"/>
        <end position="222"/>
    </location>
</feature>
<feature type="compositionally biased region" description="Polar residues" evidence="2">
    <location>
        <begin position="204"/>
        <end position="214"/>
    </location>
</feature>
<dbReference type="EC" id="2.1.1.181" evidence="1"/>
<dbReference type="EMBL" id="CP000685">
    <property type="protein sequence ID" value="ABQ05202.1"/>
    <property type="molecule type" value="Genomic_DNA"/>
</dbReference>
<dbReference type="RefSeq" id="WP_012024241.1">
    <property type="nucleotide sequence ID" value="NC_009441.1"/>
</dbReference>
<dbReference type="SMR" id="A5FHX5"/>
<dbReference type="STRING" id="376686.Fjoh_2174"/>
<dbReference type="KEGG" id="fjo:Fjoh_2174"/>
<dbReference type="eggNOG" id="COG3129">
    <property type="taxonomic scope" value="Bacteria"/>
</dbReference>
<dbReference type="HOGENOM" id="CLU_027534_3_0_10"/>
<dbReference type="OrthoDB" id="1115728at2"/>
<dbReference type="Proteomes" id="UP000006694">
    <property type="component" value="Chromosome"/>
</dbReference>
<dbReference type="GO" id="GO:0005737">
    <property type="term" value="C:cytoplasm"/>
    <property type="evidence" value="ECO:0007669"/>
    <property type="project" value="UniProtKB-SubCell"/>
</dbReference>
<dbReference type="GO" id="GO:0052907">
    <property type="term" value="F:23S rRNA (adenine(1618)-N(6))-methyltransferase activity"/>
    <property type="evidence" value="ECO:0007669"/>
    <property type="project" value="UniProtKB-EC"/>
</dbReference>
<dbReference type="GO" id="GO:0070475">
    <property type="term" value="P:rRNA base methylation"/>
    <property type="evidence" value="ECO:0007669"/>
    <property type="project" value="TreeGrafter"/>
</dbReference>
<dbReference type="Gene3D" id="3.40.50.150">
    <property type="entry name" value="Vaccinia Virus protein VP39"/>
    <property type="match status" value="1"/>
</dbReference>
<dbReference type="HAMAP" id="MF_01848">
    <property type="entry name" value="23SrRNA_methyltr_F"/>
    <property type="match status" value="1"/>
</dbReference>
<dbReference type="InterPro" id="IPR010286">
    <property type="entry name" value="METTL16/RlmF"/>
</dbReference>
<dbReference type="InterPro" id="IPR016909">
    <property type="entry name" value="rRNA_lsu_MeTfrase_F"/>
</dbReference>
<dbReference type="InterPro" id="IPR029063">
    <property type="entry name" value="SAM-dependent_MTases_sf"/>
</dbReference>
<dbReference type="NCBIfam" id="NF008725">
    <property type="entry name" value="PRK11727.1"/>
    <property type="match status" value="1"/>
</dbReference>
<dbReference type="PANTHER" id="PTHR13393:SF0">
    <property type="entry name" value="RNA N6-ADENOSINE-METHYLTRANSFERASE METTL16"/>
    <property type="match status" value="1"/>
</dbReference>
<dbReference type="PANTHER" id="PTHR13393">
    <property type="entry name" value="SAM-DEPENDENT METHYLTRANSFERASE"/>
    <property type="match status" value="1"/>
</dbReference>
<dbReference type="Pfam" id="PF05971">
    <property type="entry name" value="Methyltransf_10"/>
    <property type="match status" value="1"/>
</dbReference>
<dbReference type="PIRSF" id="PIRSF029038">
    <property type="entry name" value="Mtase_YbiN_prd"/>
    <property type="match status" value="1"/>
</dbReference>
<dbReference type="SUPFAM" id="SSF53335">
    <property type="entry name" value="S-adenosyl-L-methionine-dependent methyltransferases"/>
    <property type="match status" value="1"/>
</dbReference>
<evidence type="ECO:0000255" key="1">
    <source>
        <dbReference type="HAMAP-Rule" id="MF_01848"/>
    </source>
</evidence>
<evidence type="ECO:0000256" key="2">
    <source>
        <dbReference type="SAM" id="MobiDB-lite"/>
    </source>
</evidence>
<gene>
    <name evidence="1" type="primary">rlmF</name>
    <name type="ordered locus">Fjoh_2174</name>
</gene>
<accession>A5FHX5</accession>
<comment type="function">
    <text evidence="1">Specifically methylates the adenine in position 1618 of 23S rRNA.</text>
</comment>
<comment type="catalytic activity">
    <reaction evidence="1">
        <text>adenosine(1618) in 23S rRNA + S-adenosyl-L-methionine = N(6)-methyladenosine(1618) in 23S rRNA + S-adenosyl-L-homocysteine + H(+)</text>
        <dbReference type="Rhea" id="RHEA:16497"/>
        <dbReference type="Rhea" id="RHEA-COMP:10229"/>
        <dbReference type="Rhea" id="RHEA-COMP:10231"/>
        <dbReference type="ChEBI" id="CHEBI:15378"/>
        <dbReference type="ChEBI" id="CHEBI:57856"/>
        <dbReference type="ChEBI" id="CHEBI:59789"/>
        <dbReference type="ChEBI" id="CHEBI:74411"/>
        <dbReference type="ChEBI" id="CHEBI:74449"/>
        <dbReference type="EC" id="2.1.1.181"/>
    </reaction>
</comment>
<comment type="subcellular location">
    <subcellularLocation>
        <location evidence="1">Cytoplasm</location>
    </subcellularLocation>
</comment>
<comment type="similarity">
    <text evidence="1">Belongs to the methyltransferase superfamily. METTL16/RlmF family.</text>
</comment>